<gene>
    <name type="ordered locus">GK0418</name>
</gene>
<keyword id="KW-1185">Reference proteome</keyword>
<organism>
    <name type="scientific">Geobacillus kaustophilus (strain HTA426)</name>
    <dbReference type="NCBI Taxonomy" id="235909"/>
    <lineage>
        <taxon>Bacteria</taxon>
        <taxon>Bacillati</taxon>
        <taxon>Bacillota</taxon>
        <taxon>Bacilli</taxon>
        <taxon>Bacillales</taxon>
        <taxon>Anoxybacillaceae</taxon>
        <taxon>Geobacillus</taxon>
        <taxon>Geobacillus thermoleovorans group</taxon>
    </lineage>
</organism>
<sequence>MDLSKRSAENVAYMIEQLKQKLKVLNLDAIKPSHFSEEWYDELRDIYEMVMKRETFSPSEMQAIVEELGSLRKK</sequence>
<comment type="similarity">
    <text evidence="1">Belongs to the UPF0435 family.</text>
</comment>
<reference key="1">
    <citation type="journal article" date="2004" name="Nucleic Acids Res.">
        <title>Thermoadaptation trait revealed by the genome sequence of thermophilic Geobacillus kaustophilus.</title>
        <authorList>
            <person name="Takami H."/>
            <person name="Takaki Y."/>
            <person name="Chee G.-J."/>
            <person name="Nishi S."/>
            <person name="Shimamura S."/>
            <person name="Suzuki H."/>
            <person name="Matsui S."/>
            <person name="Uchiyama I."/>
        </authorList>
    </citation>
    <scope>NUCLEOTIDE SEQUENCE [LARGE SCALE GENOMIC DNA]</scope>
    <source>
        <strain>HTA426</strain>
    </source>
</reference>
<accession>Q5L2X7</accession>
<dbReference type="EMBL" id="BA000043">
    <property type="protein sequence ID" value="BAD74703.1"/>
    <property type="molecule type" value="Genomic_DNA"/>
</dbReference>
<dbReference type="RefSeq" id="WP_011229922.1">
    <property type="nucleotide sequence ID" value="NC_006510.1"/>
</dbReference>
<dbReference type="SMR" id="Q5L2X7"/>
<dbReference type="STRING" id="235909.GK0418"/>
<dbReference type="KEGG" id="gka:GK0418"/>
<dbReference type="eggNOG" id="COG4840">
    <property type="taxonomic scope" value="Bacteria"/>
</dbReference>
<dbReference type="HOGENOM" id="CLU_199533_1_0_9"/>
<dbReference type="Proteomes" id="UP000001172">
    <property type="component" value="Chromosome"/>
</dbReference>
<dbReference type="HAMAP" id="MF_00829">
    <property type="entry name" value="UPF0435"/>
    <property type="match status" value="1"/>
</dbReference>
<dbReference type="InterPro" id="IPR009507">
    <property type="entry name" value="UPF0435"/>
</dbReference>
<dbReference type="Pfam" id="PF06569">
    <property type="entry name" value="DUF1128"/>
    <property type="match status" value="1"/>
</dbReference>
<name>Y418_GEOKA</name>
<feature type="chain" id="PRO_0000291409" description="UPF0435 protein GK0418">
    <location>
        <begin position="1"/>
        <end position="74"/>
    </location>
</feature>
<protein>
    <recommendedName>
        <fullName evidence="1">UPF0435 protein GK0418</fullName>
    </recommendedName>
</protein>
<evidence type="ECO:0000255" key="1">
    <source>
        <dbReference type="HAMAP-Rule" id="MF_00829"/>
    </source>
</evidence>
<proteinExistence type="inferred from homology"/>